<dbReference type="EMBL" id="X14717">
    <property type="protein sequence ID" value="CAA32838.1"/>
    <property type="molecule type" value="Genomic_DNA"/>
</dbReference>
<dbReference type="PIR" id="S15921">
    <property type="entry name" value="S15921"/>
</dbReference>
<dbReference type="InterPro" id="IPR051441">
    <property type="entry name" value="SelW_related"/>
</dbReference>
<dbReference type="PANTHER" id="PTHR15124:SF27">
    <property type="entry name" value="MIGRATION AND INVASION ENHANCER 1"/>
    <property type="match status" value="1"/>
</dbReference>
<dbReference type="PANTHER" id="PTHR15124">
    <property type="entry name" value="SELENOPROTEIN W"/>
    <property type="match status" value="1"/>
</dbReference>
<accession>P19275</accession>
<feature type="chain" id="PRO_0000222956" description="Viral protein TPX">
    <location>
        <begin position="1"/>
        <end position="474"/>
    </location>
</feature>
<feature type="repeat" description="Thr-Pro(N)">
    <location>
        <begin position="278"/>
        <end position="367"/>
    </location>
</feature>
<feature type="repeat">
    <location>
        <begin position="368"/>
        <end position="377"/>
    </location>
</feature>
<feature type="repeat" description="Thr-Pro(N)">
    <location>
        <begin position="378"/>
        <end position="436"/>
    </location>
</feature>
<feature type="repeat">
    <location>
        <begin position="437"/>
        <end position="446"/>
    </location>
</feature>
<feature type="repeat" description="Thr-Pro(N)">
    <location>
        <begin position="447"/>
        <end position="467"/>
    </location>
</feature>
<feature type="region of interest" description="Disordered" evidence="1">
    <location>
        <begin position="268"/>
        <end position="474"/>
    </location>
</feature>
<feature type="region of interest" description="3 Thr-Pro repeats regions and two near identical repeats">
    <location>
        <begin position="278"/>
        <end position="467"/>
    </location>
</feature>
<feature type="compositionally biased region" description="Pro residues" evidence="1">
    <location>
        <begin position="275"/>
        <end position="365"/>
    </location>
</feature>
<feature type="compositionally biased region" description="Pro residues" evidence="1">
    <location>
        <begin position="380"/>
        <end position="434"/>
    </location>
</feature>
<feature type="compositionally biased region" description="Pro residues" evidence="1">
    <location>
        <begin position="449"/>
        <end position="465"/>
    </location>
</feature>
<evidence type="ECO:0000256" key="1">
    <source>
        <dbReference type="SAM" id="MobiDB-lite"/>
    </source>
</evidence>
<organism>
    <name type="scientific">Thermoproteus tenax virus 1 (strain VT3)</name>
    <name type="common">TTV1</name>
    <dbReference type="NCBI Taxonomy" id="10481"/>
    <lineage>
        <taxon>Viruses</taxon>
        <taxon>Adnaviria</taxon>
        <taxon>Zilligvirae</taxon>
        <taxon>Taleaviricota</taxon>
        <taxon>Tokiviricetes</taxon>
        <taxon>Primavirales</taxon>
        <taxon>Tristromaviridae</taxon>
        <taxon>Betatristromavirus</taxon>
        <taxon>Betatristromavirus TTV1</taxon>
    </lineage>
</organism>
<keyword id="KW-0677">Repeat</keyword>
<name>VTP3_TTV1V</name>
<reference key="1">
    <citation type="journal article" date="1990" name="Nucleic Acids Res.">
        <title>Nucleotide sequence of the viral protein TPX of the TTV1 variant VT3.</title>
        <authorList>
            <person name="Neumann H."/>
            <person name="Zillig W."/>
        </authorList>
    </citation>
    <scope>NUCLEOTIDE SEQUENCE [GENOMIC DNA]</scope>
</reference>
<proteinExistence type="predicted"/>
<organismHost>
    <name type="scientific">Thermoproteus tenax</name>
    <dbReference type="NCBI Taxonomy" id="2271"/>
</organismHost>
<protein>
    <recommendedName>
        <fullName>Viral protein TPX</fullName>
    </recommendedName>
</protein>
<sequence>MSYQITINNNTTSNVQNIVIADPNLASLGENVVFSDSQGPLSSLYVYDGVWVIKLRSPLSPGQSITITASSGTPNIDPTIALYYNNGSSYSNLTLVGSPTVSIVQDFGGYAISAYASGDFFLVASPTGFTPSSSRLLVVDRWATTPTSLDAVGLRLYADTNDWFGVVRKYVNGAQNVSIEQKISGTYSVVNEIDISQFAAFTDPLVMYLSINGSTANVKVYKQGSNIGTVSGNYSTTPYGNPSMAGYGTVDKHYANFIVLPYEPDPQVTVTPISSPSPTPTPTPTPTPTPTPTPTPTPTPTPTPTPTPTPTPTPTPTPTPTPTPTPTPTPTPTPTPTPTPTPTPTPTPTPTPTPTPTPTPTPTPTPTYDITYVVFDVTPSPTPTPTPTPTPTPTPTPTPTPTPTPTPTPTPTPTPTPTPTPTPTPTPTPTPTPTPTYDITYVIFDVTPSPTPTPTPTPTPTPTPTPTSTTSSNI</sequence>